<organism>
    <name type="scientific">Ureaplasma parvum serovar 3 (strain ATCC 700970)</name>
    <dbReference type="NCBI Taxonomy" id="273119"/>
    <lineage>
        <taxon>Bacteria</taxon>
        <taxon>Bacillati</taxon>
        <taxon>Mycoplasmatota</taxon>
        <taxon>Mycoplasmoidales</taxon>
        <taxon>Mycoplasmoidaceae</taxon>
        <taxon>Ureaplasma</taxon>
    </lineage>
</organism>
<protein>
    <recommendedName>
        <fullName>Uncharacterized protein UU161</fullName>
    </recommendedName>
</protein>
<accession>Q9PQY3</accession>
<proteinExistence type="predicted"/>
<sequence>MANHEVIFKWYLSLNFNNSSVDWSDKDYSLTFSFDRNTDRNNMLSDSGETQQQILLWNQYQPQFLVVRVNAEKSGVNVDLWLIDIVNKTFATNFEVGLNYEWSVRTIYVGE</sequence>
<dbReference type="EMBL" id="AF222894">
    <property type="protein sequence ID" value="AAF30567.1"/>
    <property type="molecule type" value="Genomic_DNA"/>
</dbReference>
<dbReference type="RefSeq" id="WP_010891693.1">
    <property type="nucleotide sequence ID" value="NC_002162.1"/>
</dbReference>
<dbReference type="STRING" id="273119.UU161"/>
<dbReference type="EnsemblBacteria" id="AAF30567">
    <property type="protein sequence ID" value="AAF30567"/>
    <property type="gene ID" value="UU161"/>
</dbReference>
<dbReference type="KEGG" id="uur:UU161"/>
<dbReference type="HOGENOM" id="CLU_2157280_0_0_14"/>
<dbReference type="Proteomes" id="UP000000423">
    <property type="component" value="Chromosome"/>
</dbReference>
<name>Y161_UREPA</name>
<keyword id="KW-1185">Reference proteome</keyword>
<feature type="chain" id="PRO_0000220819" description="Uncharacterized protein UU161">
    <location>
        <begin position="1"/>
        <end position="111"/>
    </location>
</feature>
<gene>
    <name type="ordered locus">UU161</name>
</gene>
<reference key="1">
    <citation type="journal article" date="2000" name="Nature">
        <title>The complete sequence of the mucosal pathogen Ureaplasma urealyticum.</title>
        <authorList>
            <person name="Glass J.I."/>
            <person name="Lefkowitz E.J."/>
            <person name="Glass J.S."/>
            <person name="Heiner C.R."/>
            <person name="Chen E.Y."/>
            <person name="Cassell G.H."/>
        </authorList>
    </citation>
    <scope>NUCLEOTIDE SEQUENCE [LARGE SCALE GENOMIC DNA]</scope>
    <source>
        <strain>ATCC 700970</strain>
    </source>
</reference>